<accession>D1MEJ0</accession>
<reference key="1">
    <citation type="journal article" date="2010" name="Toxicon">
        <title>Differential gene expression profiles in the venom gland/sac of Eumenes pomiformis (Hymenoptera: Eumenidae).</title>
        <authorList>
            <person name="Baek J.H."/>
            <person name="Lee S.H."/>
        </authorList>
    </citation>
    <scope>NUCLEOTIDE SEQUENCE [MRNA]</scope>
    <scope>PROBABLE AMIDATION AT ALA-51</scope>
    <source>
        <tissue>Venom gland</tissue>
    </source>
</reference>
<reference key="2">
    <citation type="journal article" date="2011" name="Peptides">
        <title>Venom peptides from solitary hunting wasps induce feeding disorder in lepidopteran larvae.</title>
        <authorList>
            <person name="Baek J.H."/>
            <person name="Ji Y."/>
            <person name="Shin J.S."/>
            <person name="Lee S."/>
            <person name="Lee S.H."/>
        </authorList>
    </citation>
    <scope>SYNTHESIS OF 42-51</scope>
</reference>
<organism>
    <name type="scientific">Eumenes pomiformis</name>
    <name type="common">Potter wasp</name>
    <name type="synonym">Vespa pomiformis</name>
    <dbReference type="NCBI Taxonomy" id="693051"/>
    <lineage>
        <taxon>Eukaryota</taxon>
        <taxon>Metazoa</taxon>
        <taxon>Ecdysozoa</taxon>
        <taxon>Arthropoda</taxon>
        <taxon>Hexapoda</taxon>
        <taxon>Insecta</taxon>
        <taxon>Pterygota</taxon>
        <taxon>Neoptera</taxon>
        <taxon>Endopterygota</taxon>
        <taxon>Hymenoptera</taxon>
        <taxon>Apocrita</taxon>
        <taxon>Aculeata</taxon>
        <taxon>Vespoidea</taxon>
        <taxon>Vespidae</taxon>
        <taxon>Eumeninae</taxon>
        <taxon>Eumenes</taxon>
    </lineage>
</organism>
<sequence length="52" mass="5170">MRSAILLVIVAIVAILGFLGVNAEPLPSPLAEPNPHAKAAPLSPAVMASLAG</sequence>
<dbReference type="EMBL" id="GU136235">
    <property type="protein sequence ID" value="ACZ37396.1"/>
    <property type="molecule type" value="mRNA"/>
</dbReference>
<dbReference type="GO" id="GO:0005576">
    <property type="term" value="C:extracellular region"/>
    <property type="evidence" value="ECO:0007669"/>
    <property type="project" value="UniProtKB-SubCell"/>
</dbReference>
<dbReference type="GO" id="GO:0090729">
    <property type="term" value="F:toxin activity"/>
    <property type="evidence" value="ECO:0007669"/>
    <property type="project" value="UniProtKB-KW"/>
</dbReference>
<feature type="signal peptide" evidence="1">
    <location>
        <begin position="1"/>
        <end position="23"/>
    </location>
</feature>
<feature type="propeptide" id="PRO_0000453654" evidence="5">
    <location>
        <begin position="24"/>
        <end position="41"/>
    </location>
</feature>
<feature type="peptide" id="PRO_5003024269" description="Venom peptide 4a" evidence="5">
    <location>
        <begin position="42"/>
        <end position="51"/>
    </location>
</feature>
<feature type="repeat" description="AXPX 1" evidence="4">
    <location>
        <begin position="23"/>
        <end position="26"/>
    </location>
</feature>
<feature type="repeat" description="AXPX 2" evidence="4">
    <location>
        <begin position="31"/>
        <end position="34"/>
    </location>
</feature>
<feature type="repeat" description="AXPX 3" evidence="4">
    <location>
        <begin position="39"/>
        <end position="42"/>
    </location>
</feature>
<feature type="modified residue" description="Alanine amide" evidence="5">
    <location>
        <position position="51"/>
    </location>
</feature>
<comment type="subcellular location">
    <subcellularLocation>
        <location evidence="5">Secreted</location>
    </subcellularLocation>
    <text evidence="6">Has a coil conformation.</text>
</comment>
<comment type="tissue specificity">
    <text evidence="5">Expressed by the venom gland.</text>
</comment>
<comment type="miscellaneous">
    <text evidence="5">Not found in venom, suggesting that it is a minor component.</text>
</comment>
<comment type="miscellaneous">
    <text evidence="2">Negative results: has no activity against fungi (B.cinerea and C.albicans) and bacteria (E.coli and S.aureus) (PubMed:21184791). Has no hemolytic activity against human erythrocytes (PubMed:21184791). Does not show cytolytic activity against insect cell lines (PubMed:21184791). Does not induce feeding disorder in lepidopteran larvae after peptide injection in the vicinity of the head and thorax (PubMed:21184791).</text>
</comment>
<protein>
    <recommendedName>
        <fullName evidence="3">Venom peptide 4a</fullName>
        <shortName evidence="3">EpVP4a</shortName>
        <shortName evidence="7">VP4a</shortName>
    </recommendedName>
</protein>
<proteinExistence type="evidence at protein level"/>
<evidence type="ECO:0000255" key="1"/>
<evidence type="ECO:0000269" key="2">
    <source>
    </source>
</evidence>
<evidence type="ECO:0000303" key="3">
    <source>
    </source>
</evidence>
<evidence type="ECO:0000305" key="4"/>
<evidence type="ECO:0000305" key="5">
    <source>
    </source>
</evidence>
<evidence type="ECO:0000305" key="6">
    <source>
    </source>
</evidence>
<evidence type="ECO:0000312" key="7">
    <source>
        <dbReference type="EMBL" id="ACZ37396.1"/>
    </source>
</evidence>
<name>SVIPA_EUMPO</name>
<keyword id="KW-0027">Amidation</keyword>
<keyword id="KW-0677">Repeat</keyword>
<keyword id="KW-0964">Secreted</keyword>
<keyword id="KW-0732">Signal</keyword>
<keyword id="KW-0800">Toxin</keyword>